<proteinExistence type="inferred from homology"/>
<comment type="function">
    <text evidence="1">Lanthionine-containing peptide devoid of antibiotic properties, involved in the formation of aerial mycelium. Suggested to self-assemble at air-water interfaces, thus providing a film of surfactant through which nascent aerial hyphae can emerge. The aerial hyphae differentiate further into spores (By similarity).</text>
</comment>
<comment type="PTM">
    <text>Maturation involves the enzymatic conversion of Ser into dehydrated AA and the formation of thioether bonds with cysteine. This is followed by membrane translocation and cleavage of the modified precursor.</text>
</comment>
<comment type="similarity">
    <text evidence="2">Belongs to the lanthionine-containing morphogen protein family.</text>
</comment>
<reference key="1">
    <citation type="journal article" date="1993" name="J. Bacteriol.">
        <title>A gene cluster involved in aerial mycelium formation in Streptomyces griseus encodes proteins similar to the response regulators of two-component regulatory systems and membrane translocators.</title>
        <authorList>
            <person name="Ueda K."/>
            <person name="Miyake K."/>
            <person name="Horinouchi S."/>
            <person name="Beppu T."/>
        </authorList>
    </citation>
    <scope>NUCLEOTIDE SEQUENCE [GENOMIC DNA]</scope>
    <source>
        <strain>IFO 13350 / HH1</strain>
    </source>
</reference>
<feature type="signal peptide" evidence="1">
    <location>
        <begin position="1"/>
        <end position="21"/>
    </location>
</feature>
<feature type="peptide" id="PRO_0000342634" description="Lanthionine-containing peptide SapB">
    <location>
        <begin position="22"/>
        <end position="43"/>
    </location>
</feature>
<feature type="modified residue" description="2,3-didehydroalanine (Ser)" evidence="1">
    <location>
        <position position="27"/>
    </location>
</feature>
<feature type="modified residue" description="2,3-didehydroalanine (Ser)" evidence="1">
    <location>
        <position position="37"/>
    </location>
</feature>
<feature type="cross-link" description="Lanthionine (Ser-Cys)" evidence="1">
    <location>
        <begin position="24"/>
        <end position="31"/>
    </location>
</feature>
<feature type="cross-link" description="Lanthionine (Ser-Cys)" evidence="1">
    <location>
        <begin position="34"/>
        <end position="41"/>
    </location>
</feature>
<protein>
    <recommendedName>
        <fullName>Lanthionine-containing peptide SapB</fullName>
    </recommendedName>
    <alternativeName>
        <fullName>Morphogen SapB</fullName>
    </alternativeName>
    <alternativeName>
        <fullName>Rapid aerial mycelium protein S</fullName>
    </alternativeName>
    <alternativeName>
        <fullName>Spore-associated protein B</fullName>
    </alternativeName>
</protein>
<gene>
    <name type="primary">ramS</name>
    <name type="synonym">amfS</name>
</gene>
<name>LANSB_STRGR</name>
<organism>
    <name type="scientific">Streptomyces griseus</name>
    <dbReference type="NCBI Taxonomy" id="1911"/>
    <lineage>
        <taxon>Bacteria</taxon>
        <taxon>Bacillati</taxon>
        <taxon>Actinomycetota</taxon>
        <taxon>Actinomycetes</taxon>
        <taxon>Kitasatosporales</taxon>
        <taxon>Streptomycetaceae</taxon>
        <taxon>Streptomyces</taxon>
    </lineage>
</organism>
<keyword id="KW-0732">Signal</keyword>
<keyword id="KW-0883">Thioether bond</keyword>
<accession>Q07642</accession>
<evidence type="ECO:0000250" key="1"/>
<evidence type="ECO:0000305" key="2"/>
<sequence>MALLDLQAMDTPAEDSFGELRTGSQVSLLVCEYSSLSVVLCTP</sequence>
<dbReference type="EMBL" id="AB006206">
    <property type="protein sequence ID" value="BAA33539.1"/>
    <property type="molecule type" value="Genomic_DNA"/>
</dbReference>
<dbReference type="PIR" id="C47096">
    <property type="entry name" value="C47096"/>
</dbReference>
<dbReference type="InterPro" id="IPR045825">
    <property type="entry name" value="RamS"/>
</dbReference>
<dbReference type="NCBIfam" id="NF038159">
    <property type="entry name" value="lanthi_III_b"/>
    <property type="match status" value="1"/>
</dbReference>
<dbReference type="NCBIfam" id="NF033212">
    <property type="entry name" value="SapB_AmfS_lanti"/>
    <property type="match status" value="1"/>
</dbReference>
<dbReference type="Pfam" id="PF19402">
    <property type="entry name" value="RamS"/>
    <property type="match status" value="1"/>
</dbReference>